<proteinExistence type="inferred from homology"/>
<keyword id="KW-0004">4Fe-4S</keyword>
<keyword id="KW-0408">Iron</keyword>
<keyword id="KW-0411">Iron-sulfur</keyword>
<keyword id="KW-0479">Metal-binding</keyword>
<dbReference type="EMBL" id="CP000948">
    <property type="protein sequence ID" value="ACB04472.1"/>
    <property type="molecule type" value="Genomic_DNA"/>
</dbReference>
<dbReference type="RefSeq" id="WP_000619389.1">
    <property type="nucleotide sequence ID" value="NC_010473.1"/>
</dbReference>
<dbReference type="SMR" id="B1X760"/>
<dbReference type="GeneID" id="93778582"/>
<dbReference type="KEGG" id="ecd:ECDH10B_3589"/>
<dbReference type="HOGENOM" id="CLU_094569_0_0_6"/>
<dbReference type="GO" id="GO:0051539">
    <property type="term" value="F:4 iron, 4 sulfur cluster binding"/>
    <property type="evidence" value="ECO:0007669"/>
    <property type="project" value="UniProtKB-UniRule"/>
</dbReference>
<dbReference type="GO" id="GO:0005506">
    <property type="term" value="F:iron ion binding"/>
    <property type="evidence" value="ECO:0007669"/>
    <property type="project" value="InterPro"/>
</dbReference>
<dbReference type="GO" id="GO:0016226">
    <property type="term" value="P:iron-sulfur cluster assembly"/>
    <property type="evidence" value="ECO:0007669"/>
    <property type="project" value="UniProtKB-UniRule"/>
</dbReference>
<dbReference type="GO" id="GO:0051604">
    <property type="term" value="P:protein maturation"/>
    <property type="evidence" value="ECO:0007669"/>
    <property type="project" value="UniProtKB-UniRule"/>
</dbReference>
<dbReference type="FunFam" id="2.60.300.12:FF:000004">
    <property type="entry name" value="Fe/S biogenesis protein NfuA"/>
    <property type="match status" value="1"/>
</dbReference>
<dbReference type="FunFam" id="3.30.300.130:FF:000002">
    <property type="entry name" value="Fe/S biogenesis protein NfuA"/>
    <property type="match status" value="1"/>
</dbReference>
<dbReference type="Gene3D" id="3.30.300.130">
    <property type="entry name" value="Fe-S cluster assembly (FSCA)"/>
    <property type="match status" value="1"/>
</dbReference>
<dbReference type="Gene3D" id="2.60.300.12">
    <property type="entry name" value="HesB-like domain"/>
    <property type="match status" value="1"/>
</dbReference>
<dbReference type="HAMAP" id="MF_01637">
    <property type="entry name" value="Fe_S_biogen_NfuA"/>
    <property type="match status" value="1"/>
</dbReference>
<dbReference type="InterPro" id="IPR017726">
    <property type="entry name" value="Fe/S_biogenesis_protein_NfuA"/>
</dbReference>
<dbReference type="InterPro" id="IPR000361">
    <property type="entry name" value="FeS_biogenesis"/>
</dbReference>
<dbReference type="InterPro" id="IPR034904">
    <property type="entry name" value="FSCA_dom_sf"/>
</dbReference>
<dbReference type="InterPro" id="IPR035903">
    <property type="entry name" value="HesB-like_dom_sf"/>
</dbReference>
<dbReference type="InterPro" id="IPR001075">
    <property type="entry name" value="NIF_FeS_clus_asmbl_NifU_C"/>
</dbReference>
<dbReference type="NCBIfam" id="NF008392">
    <property type="entry name" value="PRK11190.1"/>
    <property type="match status" value="1"/>
</dbReference>
<dbReference type="NCBIfam" id="TIGR03341">
    <property type="entry name" value="YhgI_GntY"/>
    <property type="match status" value="1"/>
</dbReference>
<dbReference type="PANTHER" id="PTHR11178:SF51">
    <property type="entry name" value="FE_S BIOGENESIS PROTEIN NFUA"/>
    <property type="match status" value="1"/>
</dbReference>
<dbReference type="PANTHER" id="PTHR11178">
    <property type="entry name" value="IRON-SULFUR CLUSTER SCAFFOLD PROTEIN NFU-RELATED"/>
    <property type="match status" value="1"/>
</dbReference>
<dbReference type="Pfam" id="PF01521">
    <property type="entry name" value="Fe-S_biosyn"/>
    <property type="match status" value="1"/>
</dbReference>
<dbReference type="Pfam" id="PF01106">
    <property type="entry name" value="NifU"/>
    <property type="match status" value="1"/>
</dbReference>
<dbReference type="SUPFAM" id="SSF117916">
    <property type="entry name" value="Fe-S cluster assembly (FSCA) domain-like"/>
    <property type="match status" value="1"/>
</dbReference>
<dbReference type="SUPFAM" id="SSF89360">
    <property type="entry name" value="HesB-like domain"/>
    <property type="match status" value="1"/>
</dbReference>
<comment type="function">
    <text evidence="1">Involved in iron-sulfur cluster biogenesis. Binds a 4Fe-4S cluster, can transfer this cluster to apoproteins, and thereby intervenes in the maturation of Fe/S proteins. Could also act as a scaffold/chaperone for damaged Fe/S proteins.</text>
</comment>
<comment type="cofactor">
    <cofactor evidence="1">
        <name>[4Fe-4S] cluster</name>
        <dbReference type="ChEBI" id="CHEBI:49883"/>
    </cofactor>
    <text evidence="1">Binds 1 [4Fe-4S] cluster per subunit. The cluster is presumably bound at the interface of two monomers.</text>
</comment>
<comment type="subunit">
    <text evidence="1">Homodimer.</text>
</comment>
<comment type="similarity">
    <text evidence="1">Belongs to the NfuA family.</text>
</comment>
<accession>B1X760</accession>
<name>NFUA_ECODH</name>
<gene>
    <name evidence="1" type="primary">nfuA</name>
    <name type="ordered locus">ECDH10B_3589</name>
</gene>
<organism>
    <name type="scientific">Escherichia coli (strain K12 / DH10B)</name>
    <dbReference type="NCBI Taxonomy" id="316385"/>
    <lineage>
        <taxon>Bacteria</taxon>
        <taxon>Pseudomonadati</taxon>
        <taxon>Pseudomonadota</taxon>
        <taxon>Gammaproteobacteria</taxon>
        <taxon>Enterobacterales</taxon>
        <taxon>Enterobacteriaceae</taxon>
        <taxon>Escherichia</taxon>
    </lineage>
</organism>
<reference key="1">
    <citation type="journal article" date="2008" name="J. Bacteriol.">
        <title>The complete genome sequence of Escherichia coli DH10B: insights into the biology of a laboratory workhorse.</title>
        <authorList>
            <person name="Durfee T."/>
            <person name="Nelson R."/>
            <person name="Baldwin S."/>
            <person name="Plunkett G. III"/>
            <person name="Burland V."/>
            <person name="Mau B."/>
            <person name="Petrosino J.F."/>
            <person name="Qin X."/>
            <person name="Muzny D.M."/>
            <person name="Ayele M."/>
            <person name="Gibbs R.A."/>
            <person name="Csorgo B."/>
            <person name="Posfai G."/>
            <person name="Weinstock G.M."/>
            <person name="Blattner F.R."/>
        </authorList>
    </citation>
    <scope>NUCLEOTIDE SEQUENCE [LARGE SCALE GENOMIC DNA]</scope>
    <source>
        <strain>K12 / DH10B</strain>
    </source>
</reference>
<sequence length="191" mass="20998">MIRISDAAQAHFAKLLANQEEGTQIRVFVINPGTPNAECGVSYCPPDAVEATDTALKFDLLTAYVDELSAPYLEDAEIDFVTDQLGSQLTLKAPNAKMRKVADDAPLMERVEYMLQSQINPQLAGHGGRVSLMEITEDGYAILQFGGGCNGCSMVDVTLKEGIEKQLLNEFPELKGVRDLTEHQRGEHSYY</sequence>
<evidence type="ECO:0000255" key="1">
    <source>
        <dbReference type="HAMAP-Rule" id="MF_01637"/>
    </source>
</evidence>
<protein>
    <recommendedName>
        <fullName evidence="1">Fe/S biogenesis protein NfuA</fullName>
    </recommendedName>
</protein>
<feature type="chain" id="PRO_1000186749" description="Fe/S biogenesis protein NfuA">
    <location>
        <begin position="1"/>
        <end position="191"/>
    </location>
</feature>
<feature type="binding site" evidence="1">
    <location>
        <position position="149"/>
    </location>
    <ligand>
        <name>[4Fe-4S] cluster</name>
        <dbReference type="ChEBI" id="CHEBI:49883"/>
    </ligand>
</feature>
<feature type="binding site" evidence="1">
    <location>
        <position position="152"/>
    </location>
    <ligand>
        <name>[4Fe-4S] cluster</name>
        <dbReference type="ChEBI" id="CHEBI:49883"/>
    </ligand>
</feature>